<gene>
    <name evidence="2" type="primary">rpsL</name>
    <name type="ordered locus">HPAG1_1136</name>
</gene>
<proteinExistence type="inferred from homology"/>
<evidence type="ECO:0000250" key="1"/>
<evidence type="ECO:0000255" key="2">
    <source>
        <dbReference type="HAMAP-Rule" id="MF_00403"/>
    </source>
</evidence>
<evidence type="ECO:0000256" key="3">
    <source>
        <dbReference type="SAM" id="MobiDB-lite"/>
    </source>
</evidence>
<evidence type="ECO:0000305" key="4"/>
<dbReference type="EMBL" id="CP000241">
    <property type="protein sequence ID" value="ABF85203.1"/>
    <property type="molecule type" value="Genomic_DNA"/>
</dbReference>
<dbReference type="RefSeq" id="WP_001142322.1">
    <property type="nucleotide sequence ID" value="NC_008086.1"/>
</dbReference>
<dbReference type="SMR" id="Q1CS69"/>
<dbReference type="KEGG" id="hpa:HPAG1_1136"/>
<dbReference type="HOGENOM" id="CLU_104295_1_2_7"/>
<dbReference type="GO" id="GO:0015935">
    <property type="term" value="C:small ribosomal subunit"/>
    <property type="evidence" value="ECO:0007669"/>
    <property type="project" value="InterPro"/>
</dbReference>
<dbReference type="GO" id="GO:0019843">
    <property type="term" value="F:rRNA binding"/>
    <property type="evidence" value="ECO:0007669"/>
    <property type="project" value="UniProtKB-UniRule"/>
</dbReference>
<dbReference type="GO" id="GO:0003735">
    <property type="term" value="F:structural constituent of ribosome"/>
    <property type="evidence" value="ECO:0007669"/>
    <property type="project" value="InterPro"/>
</dbReference>
<dbReference type="GO" id="GO:0000049">
    <property type="term" value="F:tRNA binding"/>
    <property type="evidence" value="ECO:0007669"/>
    <property type="project" value="UniProtKB-UniRule"/>
</dbReference>
<dbReference type="GO" id="GO:0006412">
    <property type="term" value="P:translation"/>
    <property type="evidence" value="ECO:0007669"/>
    <property type="project" value="UniProtKB-UniRule"/>
</dbReference>
<dbReference type="CDD" id="cd03368">
    <property type="entry name" value="Ribosomal_S12"/>
    <property type="match status" value="1"/>
</dbReference>
<dbReference type="FunFam" id="2.40.50.140:FF:000001">
    <property type="entry name" value="30S ribosomal protein S12"/>
    <property type="match status" value="1"/>
</dbReference>
<dbReference type="Gene3D" id="2.40.50.140">
    <property type="entry name" value="Nucleic acid-binding proteins"/>
    <property type="match status" value="1"/>
</dbReference>
<dbReference type="HAMAP" id="MF_00403_B">
    <property type="entry name" value="Ribosomal_uS12_B"/>
    <property type="match status" value="1"/>
</dbReference>
<dbReference type="InterPro" id="IPR012340">
    <property type="entry name" value="NA-bd_OB-fold"/>
</dbReference>
<dbReference type="InterPro" id="IPR006032">
    <property type="entry name" value="Ribosomal_uS12"/>
</dbReference>
<dbReference type="InterPro" id="IPR005679">
    <property type="entry name" value="Ribosomal_uS12_bac"/>
</dbReference>
<dbReference type="NCBIfam" id="TIGR00981">
    <property type="entry name" value="rpsL_bact"/>
    <property type="match status" value="1"/>
</dbReference>
<dbReference type="PANTHER" id="PTHR11652">
    <property type="entry name" value="30S RIBOSOMAL PROTEIN S12 FAMILY MEMBER"/>
    <property type="match status" value="1"/>
</dbReference>
<dbReference type="Pfam" id="PF00164">
    <property type="entry name" value="Ribosom_S12_S23"/>
    <property type="match status" value="1"/>
</dbReference>
<dbReference type="PIRSF" id="PIRSF002133">
    <property type="entry name" value="Ribosomal_S12/S23"/>
    <property type="match status" value="1"/>
</dbReference>
<dbReference type="PRINTS" id="PR01034">
    <property type="entry name" value="RIBOSOMALS12"/>
</dbReference>
<dbReference type="SUPFAM" id="SSF50249">
    <property type="entry name" value="Nucleic acid-binding proteins"/>
    <property type="match status" value="1"/>
</dbReference>
<dbReference type="PROSITE" id="PS00055">
    <property type="entry name" value="RIBOSOMAL_S12"/>
    <property type="match status" value="1"/>
</dbReference>
<feature type="chain" id="PRO_0000263562" description="Small ribosomal subunit protein uS12">
    <location>
        <begin position="1"/>
        <end position="135"/>
    </location>
</feature>
<feature type="region of interest" description="Disordered" evidence="3">
    <location>
        <begin position="108"/>
        <end position="135"/>
    </location>
</feature>
<feature type="compositionally biased region" description="Basic residues" evidence="3">
    <location>
        <begin position="111"/>
        <end position="122"/>
    </location>
</feature>
<feature type="compositionally biased region" description="Basic and acidic residues" evidence="3">
    <location>
        <begin position="123"/>
        <end position="135"/>
    </location>
</feature>
<feature type="modified residue" description="3-methylthioaspartic acid" evidence="1">
    <location>
        <position position="89"/>
    </location>
</feature>
<comment type="function">
    <text evidence="2">With S4 and S5 plays an important role in translational accuracy.</text>
</comment>
<comment type="function">
    <text evidence="2">Interacts with and stabilizes bases of the 16S rRNA that are involved in tRNA selection in the A site and with the mRNA backbone. Located at the interface of the 30S and 50S subunits, it traverses the body of the 30S subunit contacting proteins on the other side and probably holding the rRNA structure together. The combined cluster of proteins S8, S12 and S17 appears to hold together the shoulder and platform of the 30S subunit.</text>
</comment>
<comment type="subunit">
    <text evidence="2">Part of the 30S ribosomal subunit. Contacts proteins S8 and S17. May interact with IF1 in the 30S initiation complex.</text>
</comment>
<comment type="similarity">
    <text evidence="2">Belongs to the universal ribosomal protein uS12 family.</text>
</comment>
<accession>Q1CS69</accession>
<name>RS12_HELPH</name>
<reference key="1">
    <citation type="journal article" date="2006" name="Proc. Natl. Acad. Sci. U.S.A.">
        <title>The complete genome sequence of a chronic atrophic gastritis Helicobacter pylori strain: evolution during disease progression.</title>
        <authorList>
            <person name="Oh J.D."/>
            <person name="Kling-Baeckhed H."/>
            <person name="Giannakis M."/>
            <person name="Xu J."/>
            <person name="Fulton R.S."/>
            <person name="Fulton L.A."/>
            <person name="Cordum H.S."/>
            <person name="Wang C."/>
            <person name="Elliott G."/>
            <person name="Edwards J."/>
            <person name="Mardis E.R."/>
            <person name="Engstrand L.G."/>
            <person name="Gordon J.I."/>
        </authorList>
    </citation>
    <scope>NUCLEOTIDE SEQUENCE [LARGE SCALE GENOMIC DNA]</scope>
    <source>
        <strain>HPAG1</strain>
    </source>
</reference>
<sequence>MPTINQLIRKERKKVVKKTKSPALVECPQRRGVCTRVYTTTPKKPNSALRKVAKVRLTSKFEVISYIPGEGHNLQEHSIVLVRGGRVKDLPGVKYHIVRGALDTAGVNKRTVSRSKYGTKKAKATDKKATDSKKK</sequence>
<keyword id="KW-0488">Methylation</keyword>
<keyword id="KW-0687">Ribonucleoprotein</keyword>
<keyword id="KW-0689">Ribosomal protein</keyword>
<keyword id="KW-0694">RNA-binding</keyword>
<keyword id="KW-0699">rRNA-binding</keyword>
<keyword id="KW-0820">tRNA-binding</keyword>
<protein>
    <recommendedName>
        <fullName evidence="2">Small ribosomal subunit protein uS12</fullName>
    </recommendedName>
    <alternativeName>
        <fullName evidence="4">30S ribosomal protein S12</fullName>
    </alternativeName>
</protein>
<organism>
    <name type="scientific">Helicobacter pylori (strain HPAG1)</name>
    <dbReference type="NCBI Taxonomy" id="357544"/>
    <lineage>
        <taxon>Bacteria</taxon>
        <taxon>Pseudomonadati</taxon>
        <taxon>Campylobacterota</taxon>
        <taxon>Epsilonproteobacteria</taxon>
        <taxon>Campylobacterales</taxon>
        <taxon>Helicobacteraceae</taxon>
        <taxon>Helicobacter</taxon>
    </lineage>
</organism>